<organism>
    <name type="scientific">Avian infectious bursal disease virus (strain STC)</name>
    <name type="common">IBDV</name>
    <name type="synonym">Gumboro disease virus</name>
    <dbReference type="NCBI Taxonomy" id="11001"/>
    <lineage>
        <taxon>Viruses</taxon>
        <taxon>Riboviria</taxon>
        <taxon>Orthornavirae</taxon>
        <taxon>Birnaviridae</taxon>
        <taxon>Avibirnavirus</taxon>
        <taxon>Avibirnavirus gumboroense</taxon>
    </lineage>
</organism>
<name>POLS_IBDVS</name>
<protein>
    <recommendedName>
        <fullName>Structural polyprotein</fullName>
        <shortName>PP</shortName>
    </recommendedName>
    <component>
        <recommendedName>
            <fullName>Precursor of VP2</fullName>
            <shortName>Pre-VP2</shortName>
        </recommendedName>
    </component>
    <component>
        <recommendedName>
            <fullName>Capsid protein VP2</fullName>
        </recommendedName>
    </component>
    <component>
        <recommendedName>
            <fullName>Structural peptide 1</fullName>
            <shortName>p1</shortName>
        </recommendedName>
        <alternativeName>
            <fullName>pep46</fullName>
        </alternativeName>
    </component>
    <component>
        <recommendedName>
            <fullName>Structural peptide 2</fullName>
            <shortName>p2</shortName>
        </recommendedName>
        <alternativeName>
            <fullName>pep7a</fullName>
        </alternativeName>
    </component>
    <component>
        <recommendedName>
            <fullName>Structural peptide 3</fullName>
            <shortName>p3</shortName>
        </recommendedName>
        <alternativeName>
            <fullName>pep7b</fullName>
        </alternativeName>
    </component>
    <component>
        <recommendedName>
            <fullName>Structural peptide 4</fullName>
            <shortName>p4</shortName>
        </recommendedName>
        <alternativeName>
            <fullName>pep11</fullName>
        </alternativeName>
    </component>
    <component>
        <recommendedName>
            <fullName>Protease VP4</fullName>
            <ecNumber>3.4.21.-</ecNumber>
        </recommendedName>
        <alternativeName>
            <fullName>Non-structural protein VP4</fullName>
            <shortName>NS</shortName>
        </alternativeName>
    </component>
    <component>
        <recommendedName>
            <fullName>Capsid protein VP3</fullName>
        </recommendedName>
    </component>
</protein>
<organismHost>
    <name type="scientific">Gallus gallus</name>
    <name type="common">Chicken</name>
    <dbReference type="NCBI Taxonomy" id="9031"/>
</organismHost>
<organismHost>
    <name type="scientific">Meleagris gallopavo</name>
    <name type="common">Wild turkey</name>
    <dbReference type="NCBI Taxonomy" id="9103"/>
</organismHost>
<feature type="chain" id="PRO_0000392596" description="Structural polyprotein">
    <location>
        <begin position="1"/>
        <end position="1012"/>
    </location>
</feature>
<feature type="chain" id="PRO_0000392597" description="Precursor of VP2">
    <location>
        <begin position="1"/>
        <end position="512"/>
    </location>
</feature>
<feature type="chain" id="PRO_0000036777" description="Capsid protein VP2">
    <location>
        <begin position="1"/>
        <end position="441"/>
    </location>
</feature>
<feature type="peptide" id="PRO_0000227855" description="Structural peptide 1" evidence="1">
    <location>
        <begin position="442"/>
        <end position="487"/>
    </location>
</feature>
<feature type="peptide" id="PRO_0000227856" description="Structural peptide 2" evidence="1">
    <location>
        <begin position="488"/>
        <end position="494"/>
    </location>
</feature>
<feature type="peptide" id="PRO_0000227857" description="Structural peptide 3" evidence="1">
    <location>
        <begin position="495"/>
        <end position="501"/>
    </location>
</feature>
<feature type="peptide" id="PRO_0000227858" description="Structural peptide 4" evidence="1">
    <location>
        <begin position="502"/>
        <end position="512"/>
    </location>
</feature>
<feature type="chain" id="PRO_0000036778" description="Protease VP4">
    <location>
        <begin position="513"/>
        <end position="755"/>
    </location>
</feature>
<feature type="chain" id="PRO_0000036779" description="Capsid protein VP3">
    <location>
        <begin position="756"/>
        <end position="1012"/>
    </location>
</feature>
<feature type="domain" description="Peptidase S50" evidence="2">
    <location>
        <begin position="513"/>
        <end position="755"/>
    </location>
</feature>
<feature type="region of interest" description="Disordered" evidence="3">
    <location>
        <begin position="969"/>
        <end position="1012"/>
    </location>
</feature>
<feature type="region of interest" description="Interaction with VP1 protein" evidence="1">
    <location>
        <begin position="1003"/>
        <end position="1012"/>
    </location>
</feature>
<feature type="compositionally biased region" description="Basic residues" evidence="3">
    <location>
        <begin position="975"/>
        <end position="986"/>
    </location>
</feature>
<feature type="active site" description="Nucleophile" evidence="2">
    <location>
        <position position="652"/>
    </location>
</feature>
<feature type="active site" evidence="2">
    <location>
        <position position="692"/>
    </location>
</feature>
<feature type="binding site" evidence="1">
    <location>
        <position position="30"/>
    </location>
    <ligand>
        <name>a divalent metal cation</name>
        <dbReference type="ChEBI" id="CHEBI:60240"/>
        <note>ligand shared between trimeric partners</note>
    </ligand>
</feature>
<feature type="site" description="Cleavage; by protease VP4" evidence="1">
    <location>
        <begin position="441"/>
        <end position="442"/>
    </location>
</feature>
<feature type="site" description="Cleavage; by protease VP4" evidence="1">
    <location>
        <begin position="487"/>
        <end position="488"/>
    </location>
</feature>
<feature type="site" description="Cleavage; by protease VP4" evidence="1">
    <location>
        <begin position="494"/>
        <end position="495"/>
    </location>
</feature>
<feature type="site" description="Cleavage; by protease VP4" evidence="1">
    <location>
        <begin position="501"/>
        <end position="502"/>
    </location>
</feature>
<feature type="site" description="Cleavage; by protease VP4" evidence="1">
    <location>
        <begin position="512"/>
        <end position="513"/>
    </location>
</feature>
<feature type="site" description="Cleavage; by protease VP4" evidence="1">
    <location>
        <begin position="755"/>
        <end position="756"/>
    </location>
</feature>
<reference key="1">
    <citation type="journal article" date="1990" name="J. Gen. Virol.">
        <title>Nucleotide sequence analysis of genome segment A of infectious bursal disease virus.</title>
        <authorList>
            <person name="Kibenge F.S.B."/>
            <person name="Jackwood D.J."/>
            <person name="Mercado C.C."/>
        </authorList>
    </citation>
    <scope>NUCLEOTIDE SEQUENCE [GENOMIC RNA]</scope>
</reference>
<dbReference type="EC" id="3.4.21.-"/>
<dbReference type="EMBL" id="D00499">
    <property type="protein sequence ID" value="BAA00391.1"/>
    <property type="molecule type" value="Genomic_RNA"/>
</dbReference>
<dbReference type="PIR" id="JS0360">
    <property type="entry name" value="GNXSIR"/>
</dbReference>
<dbReference type="BMRB" id="P22351"/>
<dbReference type="SMR" id="P22351"/>
<dbReference type="MEROPS" id="S50.002"/>
<dbReference type="GO" id="GO:0030430">
    <property type="term" value="C:host cell cytoplasm"/>
    <property type="evidence" value="ECO:0007669"/>
    <property type="project" value="UniProtKB-SubCell"/>
</dbReference>
<dbReference type="GO" id="GO:0039621">
    <property type="term" value="C:T=13 icosahedral viral capsid"/>
    <property type="evidence" value="ECO:0007669"/>
    <property type="project" value="UniProtKB-KW"/>
</dbReference>
<dbReference type="GO" id="GO:0046872">
    <property type="term" value="F:metal ion binding"/>
    <property type="evidence" value="ECO:0007669"/>
    <property type="project" value="UniProtKB-KW"/>
</dbReference>
<dbReference type="GO" id="GO:0008236">
    <property type="term" value="F:serine-type peptidase activity"/>
    <property type="evidence" value="ECO:0007669"/>
    <property type="project" value="UniProtKB-KW"/>
</dbReference>
<dbReference type="GO" id="GO:0005198">
    <property type="term" value="F:structural molecule activity"/>
    <property type="evidence" value="ECO:0007669"/>
    <property type="project" value="InterPro"/>
</dbReference>
<dbReference type="GO" id="GO:0006508">
    <property type="term" value="P:proteolysis"/>
    <property type="evidence" value="ECO:0007669"/>
    <property type="project" value="UniProtKB-KW"/>
</dbReference>
<dbReference type="FunFam" id="2.60.120.660:FF:000001">
    <property type="entry name" value="Structural polyprotein"/>
    <property type="match status" value="1"/>
</dbReference>
<dbReference type="Gene3D" id="2.60.120.20">
    <property type="match status" value="1"/>
</dbReference>
<dbReference type="Gene3D" id="6.10.250.1030">
    <property type="match status" value="1"/>
</dbReference>
<dbReference type="Gene3D" id="1.10.8.880">
    <property type="entry name" value="Birnavirus VP3 protein, domain 2"/>
    <property type="match status" value="1"/>
</dbReference>
<dbReference type="Gene3D" id="1.10.150.620">
    <property type="entry name" value="Capsid protein VP3, domain 1"/>
    <property type="match status" value="1"/>
</dbReference>
<dbReference type="Gene3D" id="2.60.120.660">
    <property type="entry name" value="icosahedral virus"/>
    <property type="match status" value="1"/>
</dbReference>
<dbReference type="InterPro" id="IPR002662">
    <property type="entry name" value="Birna_VP2"/>
</dbReference>
<dbReference type="InterPro" id="IPR002663">
    <property type="entry name" value="Birna_VP3"/>
</dbReference>
<dbReference type="InterPro" id="IPR043048">
    <property type="entry name" value="Birna_VP3_dom1"/>
</dbReference>
<dbReference type="InterPro" id="IPR043049">
    <property type="entry name" value="Birna_VP3_dom2"/>
</dbReference>
<dbReference type="InterPro" id="IPR025775">
    <property type="entry name" value="Birna_VP4_Prtase_dom"/>
</dbReference>
<dbReference type="InterPro" id="IPR029053">
    <property type="entry name" value="Viral_coat"/>
</dbReference>
<dbReference type="Pfam" id="PF01766">
    <property type="entry name" value="Birna_VP2"/>
    <property type="match status" value="1"/>
</dbReference>
<dbReference type="Pfam" id="PF01767">
    <property type="entry name" value="Birna_VP3"/>
    <property type="match status" value="1"/>
</dbReference>
<dbReference type="Pfam" id="PF01768">
    <property type="entry name" value="Birna_VP4"/>
    <property type="match status" value="1"/>
</dbReference>
<dbReference type="SUPFAM" id="SSF88633">
    <property type="entry name" value="Positive stranded ssRNA viruses"/>
    <property type="match status" value="1"/>
</dbReference>
<dbReference type="PROSITE" id="PS51548">
    <property type="entry name" value="BIRNAVIRUS_VP4_PRO"/>
    <property type="match status" value="1"/>
</dbReference>
<accession>P22351</accession>
<evidence type="ECO:0000250" key="1"/>
<evidence type="ECO:0000255" key="2">
    <source>
        <dbReference type="PROSITE-ProRule" id="PRU00881"/>
    </source>
</evidence>
<evidence type="ECO:0000256" key="3">
    <source>
        <dbReference type="SAM" id="MobiDB-lite"/>
    </source>
</evidence>
<evidence type="ECO:0000305" key="4"/>
<sequence>MTNLQDQTQQIVPFIRSLLMPTTGPASIPDDTLEKHTLRSETSTYNLTVGDTGSGLIVFFPGFPGSIVGAHYTLQSNGNLKFDQMLLTAQNLPASYNYCRLVSRSLTVRSSTLPGGVYALNGTINAVTFQGSLSELTDVSYNGLMSATANINDKIGNVLVGEGVTVLSLPTSYDLGYVRLGDPIPAIGLDPKMVATCDSSDRPRVYTITAADDYQFSSQYQPGGVTITLFSANIDAITSLSVGGELVFQTSVQGLVLGATIYFIGFDGTTVITRAVAADNGLTAGTDNLMPFNLVIPTNEITQPITSIKLEVVTSKSGGQAGDQMSWSASGSLAVTIHGGNYPGALRPVTLVAYERVATGSVVTVAGVSNFELIPNPELAKNLVTEYGRFDPGAMNYTKLILSERDRLGIKTVWPTREYTDFREYFMEVADLNSPLKIAGAFGFKDIIRAIRRIAVPVVSTLFPPAAPLAHAIGEGVDYLLGDEAQAASGTARAASGKARAASGRIRQLTLAADKGYEVVANLFQVPQNPVVDGILASPGVLRGAHNLDCVLREGATLFPVVITTVEDAMTPKALNSKIFAVIEGVREDLQPPSQRGSFIRTLSGHRVYGYAPDGVLPLETGRDYTVVPIDDVWDDSIMLSKDPIPPIVGNSGNLAIAYMDVFRPKVPIHVAMTGALNAFGEIEKVSFRSTKLATAHRLGLKLAGPGAFDVNTGPNWATFIKRFPHNPRDWDRLPYLNLPYLPPNAGRQYHLAMAASEFKETPELESAVRAMEAAANVDPLFQSALSVFMWLEENGIVTDMANFALSDPNAHRMRNFLANAPQAGSKSQRAKYGTAGYGVEARGPTPEEAQRAKDTRISKKMETMGIYFATPEWVALNGHRGPSPAQLKYWQNTREIPDPNEDYLDYVHAEKSRLASEEQILKAATSIYGAPGQAEPPQAFIDEVAKVYEINHGRGPNQEQMKDLLLTAMELKHRNPRRAPPKPKPKPNAPTQRPPGRLGRWIRTVSDEDLE</sequence>
<comment type="function">
    <text evidence="1">Capsid protein VP2 self assembles to form an icosahedral capsid with a T=13 symmetry, about 70 nm in diameter, and consisting of 260 VP2 trimers. The capsid encapsulates the genomic dsRNA. VP2 is also involved in attachment and entry into the host cell by interacting with host ITGA4/ITGB1 (By similarity).</text>
</comment>
<comment type="function">
    <text evidence="1">The precursor of VP2 plays an important role in capsid assembly. First, pre-VP2 and VP2 oligomers assemble to form a procapsid. Then, the pre-VP2 intermediates may be processed into VP2 proteins by proteolytic cleavage mediated by VP4 to obtain the mature virion. The final capsid is composed of pentamers and hexamers but VP2 has a natural tendency to assemble into all-pentameric structures. Therefore pre-VP2 may be required to allow formation of the hexameric structures (By similarity).</text>
</comment>
<comment type="function">
    <text evidence="2">Protease VP4 is a serine protease that cleaves the polyprotein into its final products. Pre-VP2 is first partially cleaved, and may be completely processed by VP4 upon capsid maturation.</text>
</comment>
<comment type="function">
    <text evidence="1">Capsid protein VP3 plays a key role in virion assembly by providing a scaffold for the capsid made of VP2. May self-assemble to form a T=4-like icosahedral inner-capsid composed of at least 180 trimers. Plays a role in genomic RNA packaging by recruiting VP1 into the capsid and interacting with the dsRNA genome segments to form a ribonucleoprotein complex. Additionally, the interaction of the VP3 C-terminal tail with VP1 removes the inherent structural blockade of the polymerase active site. Thus, VP3 can also function as a transcriptional activator (By similarity).</text>
</comment>
<comment type="function">
    <text evidence="1">Structural peptide 1 is a small peptide derived from pre-VP2 C-terminus. It destabilizes and perforates cell membranes, suggesting a role during entry (By similarity).</text>
</comment>
<comment type="function">
    <text evidence="1">Structural peptide 2 is a small peptide derived from pVP2 C-terminus. It is not essential for the virus viability, but viral growth is affected when missing (By similarity).</text>
</comment>
<comment type="function">
    <text evidence="1">Structural peptide 3 is a small peptide derived from pVP2 C-terminus. It is not essential for the virus viability, but viral growth is affected when missing (By similarity).</text>
</comment>
<comment type="function">
    <text evidence="1">Structural peptide 4 is a small peptide derived from pVP2 C-terminus. It is essential for the virus viability (By similarity).</text>
</comment>
<comment type="subunit">
    <molecule>Capsid protein VP2</molecule>
    <text evidence="1">Homotrimer. A central divalent metal stabilizes the VP2 trimer (By similarity). Interacts with host ITGA4/ITGB1.</text>
</comment>
<comment type="subunit">
    <molecule>Capsid protein VP3</molecule>
    <text evidence="1">Homodimer. Interacts (via C-terminus) with VP1 in the cytoplasm. Interacts with VP2 (By similarity).</text>
</comment>
<comment type="subcellular location">
    <molecule>Capsid protein VP2</molecule>
    <subcellularLocation>
        <location evidence="4">Virion</location>
    </subcellularLocation>
    <subcellularLocation>
        <location evidence="4">Host cytoplasm</location>
    </subcellularLocation>
</comment>
<comment type="subcellular location">
    <molecule>Capsid protein VP3</molecule>
    <subcellularLocation>
        <location evidence="4">Virion</location>
    </subcellularLocation>
    <subcellularLocation>
        <location evidence="4">Host cytoplasm</location>
    </subcellularLocation>
</comment>
<comment type="subcellular location">
    <molecule>Structural peptide 1</molecule>
    <subcellularLocation>
        <location evidence="4">Virion</location>
    </subcellularLocation>
    <subcellularLocation>
        <location evidence="4">Host cytoplasm</location>
    </subcellularLocation>
</comment>
<comment type="subcellular location">
    <molecule>Structural peptide 2</molecule>
    <subcellularLocation>
        <location evidence="4">Virion</location>
    </subcellularLocation>
    <subcellularLocation>
        <location evidence="4">Host cytoplasm</location>
    </subcellularLocation>
</comment>
<comment type="subcellular location">
    <molecule>Structural peptide 3</molecule>
    <subcellularLocation>
        <location evidence="4">Virion</location>
    </subcellularLocation>
    <subcellularLocation>
        <location evidence="4">Host cytoplasm</location>
    </subcellularLocation>
</comment>
<comment type="subcellular location">
    <molecule>Structural peptide 4</molecule>
    <subcellularLocation>
        <location evidence="4">Virion</location>
    </subcellularLocation>
    <subcellularLocation>
        <location evidence="4">Host cytoplasm</location>
    </subcellularLocation>
</comment>
<comment type="PTM">
    <text evidence="1">Specific enzymatic cleavages yield mature proteins. The capsid assembly seems to be regulated by polyprotein processing. The protease VP4 cleaves itself off the polyprotein, thus releasing pre-VP2 and VP3 within the infected cell. During capsid assembly, the C-terminus of pre-VP2 is further processed by VP4, giving rise to VP2, the external capsid protein and three small peptides that all stay closely associated with the capsid (By similarity).</text>
</comment>
<proteinExistence type="inferred from homology"/>
<keyword id="KW-0167">Capsid protein</keyword>
<keyword id="KW-1035">Host cytoplasm</keyword>
<keyword id="KW-0378">Hydrolase</keyword>
<keyword id="KW-0479">Metal-binding</keyword>
<keyword id="KW-0645">Protease</keyword>
<keyword id="KW-0720">Serine protease</keyword>
<keyword id="KW-1146">T=13 icosahedral capsid protein</keyword>
<keyword id="KW-0946">Virion</keyword>